<name>RPOZ_STAA2</name>
<reference key="1">
    <citation type="submission" date="2007-06" db="EMBL/GenBank/DDBJ databases">
        <title>Complete sequence of chromosome of Staphylococcus aureus subsp. aureus JH1.</title>
        <authorList>
            <consortium name="US DOE Joint Genome Institute"/>
            <person name="Copeland A."/>
            <person name="Lucas S."/>
            <person name="Lapidus A."/>
            <person name="Barry K."/>
            <person name="Detter J.C."/>
            <person name="Glavina del Rio T."/>
            <person name="Hammon N."/>
            <person name="Israni S."/>
            <person name="Dalin E."/>
            <person name="Tice H."/>
            <person name="Pitluck S."/>
            <person name="Chain P."/>
            <person name="Malfatti S."/>
            <person name="Shin M."/>
            <person name="Vergez L."/>
            <person name="Schmutz J."/>
            <person name="Larimer F."/>
            <person name="Land M."/>
            <person name="Hauser L."/>
            <person name="Kyrpides N."/>
            <person name="Ivanova N."/>
            <person name="Tomasz A."/>
            <person name="Richardson P."/>
        </authorList>
    </citation>
    <scope>NUCLEOTIDE SEQUENCE [LARGE SCALE GENOMIC DNA]</scope>
    <source>
        <strain>JH1</strain>
    </source>
</reference>
<gene>
    <name evidence="1" type="primary">rpoZ</name>
    <name type="ordered locus">SaurJH1_1294</name>
</gene>
<sequence length="72" mass="8150">MLNPPLNQLTSQIKSKYLIATTAAKRAREIDEQPETELLSEYHSFKPVGRALEEIADGKIRPVISSDYYGKE</sequence>
<feature type="chain" id="PRO_1000079650" description="DNA-directed RNA polymerase subunit omega">
    <location>
        <begin position="1"/>
        <end position="72"/>
    </location>
</feature>
<proteinExistence type="inferred from homology"/>
<accession>A6U129</accession>
<protein>
    <recommendedName>
        <fullName evidence="1">DNA-directed RNA polymerase subunit omega</fullName>
        <shortName evidence="1">RNAP omega subunit</shortName>
        <ecNumber evidence="1">2.7.7.6</ecNumber>
    </recommendedName>
    <alternativeName>
        <fullName evidence="1">RNA polymerase omega subunit</fullName>
    </alternativeName>
    <alternativeName>
        <fullName evidence="1">Transcriptase subunit omega</fullName>
    </alternativeName>
</protein>
<organism>
    <name type="scientific">Staphylococcus aureus (strain JH1)</name>
    <dbReference type="NCBI Taxonomy" id="359787"/>
    <lineage>
        <taxon>Bacteria</taxon>
        <taxon>Bacillati</taxon>
        <taxon>Bacillota</taxon>
        <taxon>Bacilli</taxon>
        <taxon>Bacillales</taxon>
        <taxon>Staphylococcaceae</taxon>
        <taxon>Staphylococcus</taxon>
    </lineage>
</organism>
<dbReference type="EC" id="2.7.7.6" evidence="1"/>
<dbReference type="EMBL" id="CP000736">
    <property type="protein sequence ID" value="ABR52147.1"/>
    <property type="molecule type" value="Genomic_DNA"/>
</dbReference>
<dbReference type="SMR" id="A6U129"/>
<dbReference type="KEGG" id="sah:SaurJH1_1294"/>
<dbReference type="HOGENOM" id="CLU_125406_6_0_9"/>
<dbReference type="GO" id="GO:0000428">
    <property type="term" value="C:DNA-directed RNA polymerase complex"/>
    <property type="evidence" value="ECO:0007669"/>
    <property type="project" value="UniProtKB-KW"/>
</dbReference>
<dbReference type="GO" id="GO:0003677">
    <property type="term" value="F:DNA binding"/>
    <property type="evidence" value="ECO:0007669"/>
    <property type="project" value="UniProtKB-UniRule"/>
</dbReference>
<dbReference type="GO" id="GO:0003899">
    <property type="term" value="F:DNA-directed RNA polymerase activity"/>
    <property type="evidence" value="ECO:0007669"/>
    <property type="project" value="UniProtKB-UniRule"/>
</dbReference>
<dbReference type="GO" id="GO:0006351">
    <property type="term" value="P:DNA-templated transcription"/>
    <property type="evidence" value="ECO:0007669"/>
    <property type="project" value="UniProtKB-UniRule"/>
</dbReference>
<dbReference type="Gene3D" id="3.90.940.10">
    <property type="match status" value="1"/>
</dbReference>
<dbReference type="HAMAP" id="MF_00366">
    <property type="entry name" value="RNApol_bact_RpoZ"/>
    <property type="match status" value="1"/>
</dbReference>
<dbReference type="InterPro" id="IPR003716">
    <property type="entry name" value="DNA-dir_RNA_pol_omega"/>
</dbReference>
<dbReference type="InterPro" id="IPR006110">
    <property type="entry name" value="Pol_omega/Rpo6/RPB6"/>
</dbReference>
<dbReference type="InterPro" id="IPR036161">
    <property type="entry name" value="RPB6/omega-like_sf"/>
</dbReference>
<dbReference type="NCBIfam" id="TIGR00690">
    <property type="entry name" value="rpoZ"/>
    <property type="match status" value="1"/>
</dbReference>
<dbReference type="PANTHER" id="PTHR34476">
    <property type="entry name" value="DNA-DIRECTED RNA POLYMERASE SUBUNIT OMEGA"/>
    <property type="match status" value="1"/>
</dbReference>
<dbReference type="PANTHER" id="PTHR34476:SF1">
    <property type="entry name" value="DNA-DIRECTED RNA POLYMERASE SUBUNIT OMEGA"/>
    <property type="match status" value="1"/>
</dbReference>
<dbReference type="Pfam" id="PF01192">
    <property type="entry name" value="RNA_pol_Rpb6"/>
    <property type="match status" value="1"/>
</dbReference>
<dbReference type="SMART" id="SM01409">
    <property type="entry name" value="RNA_pol_Rpb6"/>
    <property type="match status" value="1"/>
</dbReference>
<dbReference type="SUPFAM" id="SSF63562">
    <property type="entry name" value="RPB6/omega subunit-like"/>
    <property type="match status" value="1"/>
</dbReference>
<evidence type="ECO:0000255" key="1">
    <source>
        <dbReference type="HAMAP-Rule" id="MF_00366"/>
    </source>
</evidence>
<keyword id="KW-0240">DNA-directed RNA polymerase</keyword>
<keyword id="KW-0548">Nucleotidyltransferase</keyword>
<keyword id="KW-0804">Transcription</keyword>
<keyword id="KW-0808">Transferase</keyword>
<comment type="function">
    <text evidence="1">Promotes RNA polymerase assembly. Latches the N- and C-terminal regions of the beta' subunit thereby facilitating its interaction with the beta and alpha subunits.</text>
</comment>
<comment type="catalytic activity">
    <reaction evidence="1">
        <text>RNA(n) + a ribonucleoside 5'-triphosphate = RNA(n+1) + diphosphate</text>
        <dbReference type="Rhea" id="RHEA:21248"/>
        <dbReference type="Rhea" id="RHEA-COMP:14527"/>
        <dbReference type="Rhea" id="RHEA-COMP:17342"/>
        <dbReference type="ChEBI" id="CHEBI:33019"/>
        <dbReference type="ChEBI" id="CHEBI:61557"/>
        <dbReference type="ChEBI" id="CHEBI:140395"/>
        <dbReference type="EC" id="2.7.7.6"/>
    </reaction>
</comment>
<comment type="subunit">
    <text evidence="1">The RNAP catalytic core consists of 2 alpha, 1 beta, 1 beta' and 1 omega subunit. When a sigma factor is associated with the core the holoenzyme is formed, which can initiate transcription.</text>
</comment>
<comment type="similarity">
    <text evidence="1">Belongs to the RNA polymerase subunit omega family.</text>
</comment>